<dbReference type="EMBL" id="CP000142">
    <property type="protein sequence ID" value="ABA88204.1"/>
    <property type="molecule type" value="Genomic_DNA"/>
</dbReference>
<dbReference type="RefSeq" id="WP_011340675.1">
    <property type="nucleotide sequence ID" value="NC_007498.2"/>
</dbReference>
<dbReference type="SMR" id="Q3A603"/>
<dbReference type="STRING" id="338963.Pcar_0951"/>
<dbReference type="KEGG" id="pca:Pcar_0951"/>
<dbReference type="eggNOG" id="COG0356">
    <property type="taxonomic scope" value="Bacteria"/>
</dbReference>
<dbReference type="HOGENOM" id="CLU_041018_2_2_7"/>
<dbReference type="OrthoDB" id="9789241at2"/>
<dbReference type="Proteomes" id="UP000002534">
    <property type="component" value="Chromosome"/>
</dbReference>
<dbReference type="GO" id="GO:0005886">
    <property type="term" value="C:plasma membrane"/>
    <property type="evidence" value="ECO:0007669"/>
    <property type="project" value="UniProtKB-SubCell"/>
</dbReference>
<dbReference type="GO" id="GO:0045259">
    <property type="term" value="C:proton-transporting ATP synthase complex"/>
    <property type="evidence" value="ECO:0007669"/>
    <property type="project" value="UniProtKB-KW"/>
</dbReference>
<dbReference type="GO" id="GO:0046933">
    <property type="term" value="F:proton-transporting ATP synthase activity, rotational mechanism"/>
    <property type="evidence" value="ECO:0007669"/>
    <property type="project" value="UniProtKB-UniRule"/>
</dbReference>
<dbReference type="GO" id="GO:0042777">
    <property type="term" value="P:proton motive force-driven plasma membrane ATP synthesis"/>
    <property type="evidence" value="ECO:0007669"/>
    <property type="project" value="TreeGrafter"/>
</dbReference>
<dbReference type="CDD" id="cd00310">
    <property type="entry name" value="ATP-synt_Fo_a_6"/>
    <property type="match status" value="1"/>
</dbReference>
<dbReference type="FunFam" id="1.20.120.220:FF:000006">
    <property type="entry name" value="ATP synthase subunit a"/>
    <property type="match status" value="1"/>
</dbReference>
<dbReference type="Gene3D" id="1.20.120.220">
    <property type="entry name" value="ATP synthase, F0 complex, subunit A"/>
    <property type="match status" value="1"/>
</dbReference>
<dbReference type="HAMAP" id="MF_01393">
    <property type="entry name" value="ATP_synth_a_bact"/>
    <property type="match status" value="1"/>
</dbReference>
<dbReference type="InterPro" id="IPR045082">
    <property type="entry name" value="ATP_syn_F0_a_bact/chloroplast"/>
</dbReference>
<dbReference type="InterPro" id="IPR000568">
    <property type="entry name" value="ATP_synth_F0_asu"/>
</dbReference>
<dbReference type="InterPro" id="IPR023011">
    <property type="entry name" value="ATP_synth_F0_asu_AS"/>
</dbReference>
<dbReference type="InterPro" id="IPR035908">
    <property type="entry name" value="F0_ATP_A_sf"/>
</dbReference>
<dbReference type="NCBIfam" id="TIGR01131">
    <property type="entry name" value="ATP_synt_6_or_A"/>
    <property type="match status" value="1"/>
</dbReference>
<dbReference type="PANTHER" id="PTHR42823">
    <property type="entry name" value="ATP SYNTHASE SUBUNIT A, CHLOROPLASTIC"/>
    <property type="match status" value="1"/>
</dbReference>
<dbReference type="PANTHER" id="PTHR42823:SF3">
    <property type="entry name" value="ATP SYNTHASE SUBUNIT A, CHLOROPLASTIC"/>
    <property type="match status" value="1"/>
</dbReference>
<dbReference type="Pfam" id="PF00119">
    <property type="entry name" value="ATP-synt_A"/>
    <property type="match status" value="1"/>
</dbReference>
<dbReference type="PRINTS" id="PR00123">
    <property type="entry name" value="ATPASEA"/>
</dbReference>
<dbReference type="SUPFAM" id="SSF81336">
    <property type="entry name" value="F1F0 ATP synthase subunit A"/>
    <property type="match status" value="1"/>
</dbReference>
<dbReference type="PROSITE" id="PS00449">
    <property type="entry name" value="ATPASE_A"/>
    <property type="match status" value="1"/>
</dbReference>
<accession>Q3A603</accession>
<name>ATP62_SYNC1</name>
<keyword id="KW-0066">ATP synthesis</keyword>
<keyword id="KW-0997">Cell inner membrane</keyword>
<keyword id="KW-1003">Cell membrane</keyword>
<keyword id="KW-0138">CF(0)</keyword>
<keyword id="KW-0375">Hydrogen ion transport</keyword>
<keyword id="KW-0406">Ion transport</keyword>
<keyword id="KW-0472">Membrane</keyword>
<keyword id="KW-1185">Reference proteome</keyword>
<keyword id="KW-0812">Transmembrane</keyword>
<keyword id="KW-1133">Transmembrane helix</keyword>
<keyword id="KW-0813">Transport</keyword>
<comment type="function">
    <text evidence="1">Key component of the proton channel; it plays a direct role in the translocation of protons across the membrane.</text>
</comment>
<comment type="subunit">
    <text evidence="1">F-type ATPases have 2 components, CF(1) - the catalytic core - and CF(0) - the membrane proton channel. CF(1) has five subunits: alpha(3), beta(3), gamma(1), delta(1), epsilon(1). CF(0) has three main subunits: a(1), b(2) and c(9-12). The alpha and beta chains form an alternating ring which encloses part of the gamma chain. CF(1) is attached to CF(0) by a central stalk formed by the gamma and epsilon chains, while a peripheral stalk is formed by the delta and b chains.</text>
</comment>
<comment type="subcellular location">
    <subcellularLocation>
        <location evidence="1">Cell inner membrane</location>
        <topology evidence="1">Multi-pass membrane protein</topology>
    </subcellularLocation>
</comment>
<comment type="similarity">
    <text evidence="1">Belongs to the ATPase A chain family.</text>
</comment>
<protein>
    <recommendedName>
        <fullName evidence="1">ATP synthase subunit a 2</fullName>
    </recommendedName>
    <alternativeName>
        <fullName evidence="1">ATP synthase F0 sector subunit a 2</fullName>
    </alternativeName>
    <alternativeName>
        <fullName evidence="1">F-ATPase subunit 6 2</fullName>
    </alternativeName>
</protein>
<gene>
    <name evidence="1" type="primary">atpB2</name>
    <name type="ordered locus">Pcar_0951</name>
</gene>
<reference key="1">
    <citation type="submission" date="2005-10" db="EMBL/GenBank/DDBJ databases">
        <title>Complete sequence of Pelobacter carbinolicus DSM 2380.</title>
        <authorList>
            <person name="Copeland A."/>
            <person name="Lucas S."/>
            <person name="Lapidus A."/>
            <person name="Barry K."/>
            <person name="Detter J.C."/>
            <person name="Glavina T."/>
            <person name="Hammon N."/>
            <person name="Israni S."/>
            <person name="Pitluck S."/>
            <person name="Chertkov O."/>
            <person name="Schmutz J."/>
            <person name="Larimer F."/>
            <person name="Land M."/>
            <person name="Kyrpides N."/>
            <person name="Ivanova N."/>
            <person name="Richardson P."/>
        </authorList>
    </citation>
    <scope>NUCLEOTIDE SEQUENCE [LARGE SCALE GENOMIC DNA]</scope>
    <source>
        <strain>DSM 2380 / NBRC 103641 / GraBd1</strain>
    </source>
</reference>
<evidence type="ECO:0000255" key="1">
    <source>
        <dbReference type="HAMAP-Rule" id="MF_01393"/>
    </source>
</evidence>
<feature type="chain" id="PRO_0000362365" description="ATP synthase subunit a 2">
    <location>
        <begin position="1"/>
        <end position="234"/>
    </location>
</feature>
<feature type="transmembrane region" description="Helical" evidence="1">
    <location>
        <begin position="29"/>
        <end position="49"/>
    </location>
</feature>
<feature type="transmembrane region" description="Helical" evidence="1">
    <location>
        <begin position="90"/>
        <end position="110"/>
    </location>
</feature>
<feature type="transmembrane region" description="Helical" evidence="1">
    <location>
        <begin position="116"/>
        <end position="136"/>
    </location>
</feature>
<feature type="transmembrane region" description="Helical" evidence="1">
    <location>
        <begin position="147"/>
        <end position="167"/>
    </location>
</feature>
<feature type="transmembrane region" description="Helical" evidence="1">
    <location>
        <begin position="186"/>
        <end position="206"/>
    </location>
</feature>
<feature type="transmembrane region" description="Helical" evidence="1">
    <location>
        <begin position="207"/>
        <end position="227"/>
    </location>
</feature>
<organism>
    <name type="scientific">Syntrophotalea carbinolica (strain DSM 2380 / NBRC 103641 / GraBd1)</name>
    <name type="common">Pelobacter carbinolicus</name>
    <dbReference type="NCBI Taxonomy" id="338963"/>
    <lineage>
        <taxon>Bacteria</taxon>
        <taxon>Pseudomonadati</taxon>
        <taxon>Thermodesulfobacteriota</taxon>
        <taxon>Desulfuromonadia</taxon>
        <taxon>Desulfuromonadales</taxon>
        <taxon>Syntrophotaleaceae</taxon>
        <taxon>Syntrophotalea</taxon>
    </lineage>
</organism>
<sequence length="234" mass="26036">MTHPFVLLKWLIAKLHFGFSAEMLEQHGFFQHVTHTWLVMAILIGVGLLATHRAGLVPGGMQNFMELVLVEIRGMVRDTMGPKGMVYFPLIATLALFLLVSNLIGLIPGFAPPTASLNTNAALAVGVFLVTHIVGVREHGIRYFKHFMGPVWWLTPLILPIELIGHLARPLSLSLRLFGNMYGHEIVLMIFFSLVPLLLPIPMMLMGILVAFIQTFVFMLLSMIYIAGALEEAH</sequence>
<proteinExistence type="inferred from homology"/>